<reference key="1">
    <citation type="journal article" date="2007" name="J. Bacteriol.">
        <title>Whole-genome analysis of the methyl tert-butyl ether-degrading beta-proteobacterium Methylibium petroleiphilum PM1.</title>
        <authorList>
            <person name="Kane S.R."/>
            <person name="Chakicherla A.Y."/>
            <person name="Chain P.S.G."/>
            <person name="Schmidt R."/>
            <person name="Shin M.W."/>
            <person name="Legler T.C."/>
            <person name="Scow K.M."/>
            <person name="Larimer F.W."/>
            <person name="Lucas S.M."/>
            <person name="Richardson P.M."/>
            <person name="Hristova K.R."/>
        </authorList>
    </citation>
    <scope>NUCLEOTIDE SEQUENCE [LARGE SCALE GENOMIC DNA]</scope>
    <source>
        <strain>ATCC BAA-1232 / LMG 22953 / PM1</strain>
    </source>
</reference>
<organism>
    <name type="scientific">Methylibium petroleiphilum (strain ATCC BAA-1232 / LMG 22953 / PM1)</name>
    <dbReference type="NCBI Taxonomy" id="420662"/>
    <lineage>
        <taxon>Bacteria</taxon>
        <taxon>Pseudomonadati</taxon>
        <taxon>Pseudomonadota</taxon>
        <taxon>Betaproteobacteria</taxon>
        <taxon>Burkholderiales</taxon>
        <taxon>Sphaerotilaceae</taxon>
        <taxon>Methylibium</taxon>
    </lineage>
</organism>
<sequence>MALTPTDVSRIALLARLELSEAEQSAMLSQLNGFFDIVERMRAVDTTGVAPLYTPLSAVQEVALRLREDAVTEVDQRQANQLSAPAVEAGLYLVPKVIE</sequence>
<evidence type="ECO:0000255" key="1">
    <source>
        <dbReference type="HAMAP-Rule" id="MF_00122"/>
    </source>
</evidence>
<dbReference type="EC" id="6.3.5.-" evidence="1"/>
<dbReference type="EMBL" id="CP000555">
    <property type="protein sequence ID" value="ABM93046.1"/>
    <property type="molecule type" value="Genomic_DNA"/>
</dbReference>
<dbReference type="RefSeq" id="WP_011827685.1">
    <property type="nucleotide sequence ID" value="NC_008825.1"/>
</dbReference>
<dbReference type="SMR" id="A2SBV7"/>
<dbReference type="STRING" id="420662.Mpe_A0084"/>
<dbReference type="KEGG" id="mpt:Mpe_A0084"/>
<dbReference type="eggNOG" id="COG0721">
    <property type="taxonomic scope" value="Bacteria"/>
</dbReference>
<dbReference type="HOGENOM" id="CLU_105899_2_2_4"/>
<dbReference type="Proteomes" id="UP000000366">
    <property type="component" value="Chromosome"/>
</dbReference>
<dbReference type="GO" id="GO:0050566">
    <property type="term" value="F:asparaginyl-tRNA synthase (glutamine-hydrolyzing) activity"/>
    <property type="evidence" value="ECO:0007669"/>
    <property type="project" value="RHEA"/>
</dbReference>
<dbReference type="GO" id="GO:0005524">
    <property type="term" value="F:ATP binding"/>
    <property type="evidence" value="ECO:0007669"/>
    <property type="project" value="UniProtKB-KW"/>
</dbReference>
<dbReference type="GO" id="GO:0050567">
    <property type="term" value="F:glutaminyl-tRNA synthase (glutamine-hydrolyzing) activity"/>
    <property type="evidence" value="ECO:0007669"/>
    <property type="project" value="UniProtKB-UniRule"/>
</dbReference>
<dbReference type="GO" id="GO:0070681">
    <property type="term" value="P:glutaminyl-tRNAGln biosynthesis via transamidation"/>
    <property type="evidence" value="ECO:0007669"/>
    <property type="project" value="TreeGrafter"/>
</dbReference>
<dbReference type="GO" id="GO:0006450">
    <property type="term" value="P:regulation of translational fidelity"/>
    <property type="evidence" value="ECO:0007669"/>
    <property type="project" value="InterPro"/>
</dbReference>
<dbReference type="GO" id="GO:0006412">
    <property type="term" value="P:translation"/>
    <property type="evidence" value="ECO:0007669"/>
    <property type="project" value="UniProtKB-UniRule"/>
</dbReference>
<dbReference type="Gene3D" id="1.10.20.60">
    <property type="entry name" value="Glu-tRNAGln amidotransferase C subunit, N-terminal domain"/>
    <property type="match status" value="1"/>
</dbReference>
<dbReference type="HAMAP" id="MF_00122">
    <property type="entry name" value="GatC"/>
    <property type="match status" value="1"/>
</dbReference>
<dbReference type="InterPro" id="IPR036113">
    <property type="entry name" value="Asp/Glu-ADT_sf_sub_c"/>
</dbReference>
<dbReference type="InterPro" id="IPR003837">
    <property type="entry name" value="GatC"/>
</dbReference>
<dbReference type="NCBIfam" id="TIGR00135">
    <property type="entry name" value="gatC"/>
    <property type="match status" value="1"/>
</dbReference>
<dbReference type="PANTHER" id="PTHR15004">
    <property type="entry name" value="GLUTAMYL-TRNA(GLN) AMIDOTRANSFERASE SUBUNIT C, MITOCHONDRIAL"/>
    <property type="match status" value="1"/>
</dbReference>
<dbReference type="PANTHER" id="PTHR15004:SF0">
    <property type="entry name" value="GLUTAMYL-TRNA(GLN) AMIDOTRANSFERASE SUBUNIT C, MITOCHONDRIAL"/>
    <property type="match status" value="1"/>
</dbReference>
<dbReference type="Pfam" id="PF02686">
    <property type="entry name" value="GatC"/>
    <property type="match status" value="1"/>
</dbReference>
<dbReference type="SUPFAM" id="SSF141000">
    <property type="entry name" value="Glu-tRNAGln amidotransferase C subunit"/>
    <property type="match status" value="1"/>
</dbReference>
<keyword id="KW-0067">ATP-binding</keyword>
<keyword id="KW-0436">Ligase</keyword>
<keyword id="KW-0547">Nucleotide-binding</keyword>
<keyword id="KW-0648">Protein biosynthesis</keyword>
<keyword id="KW-1185">Reference proteome</keyword>
<comment type="function">
    <text evidence="1">Allows the formation of correctly charged Asn-tRNA(Asn) or Gln-tRNA(Gln) through the transamidation of misacylated Asp-tRNA(Asn) or Glu-tRNA(Gln) in organisms which lack either or both of asparaginyl-tRNA or glutaminyl-tRNA synthetases. The reaction takes place in the presence of glutamine and ATP through an activated phospho-Asp-tRNA(Asn) or phospho-Glu-tRNA(Gln).</text>
</comment>
<comment type="catalytic activity">
    <reaction evidence="1">
        <text>L-glutamyl-tRNA(Gln) + L-glutamine + ATP + H2O = L-glutaminyl-tRNA(Gln) + L-glutamate + ADP + phosphate + H(+)</text>
        <dbReference type="Rhea" id="RHEA:17521"/>
        <dbReference type="Rhea" id="RHEA-COMP:9681"/>
        <dbReference type="Rhea" id="RHEA-COMP:9684"/>
        <dbReference type="ChEBI" id="CHEBI:15377"/>
        <dbReference type="ChEBI" id="CHEBI:15378"/>
        <dbReference type="ChEBI" id="CHEBI:29985"/>
        <dbReference type="ChEBI" id="CHEBI:30616"/>
        <dbReference type="ChEBI" id="CHEBI:43474"/>
        <dbReference type="ChEBI" id="CHEBI:58359"/>
        <dbReference type="ChEBI" id="CHEBI:78520"/>
        <dbReference type="ChEBI" id="CHEBI:78521"/>
        <dbReference type="ChEBI" id="CHEBI:456216"/>
    </reaction>
</comment>
<comment type="catalytic activity">
    <reaction evidence="1">
        <text>L-aspartyl-tRNA(Asn) + L-glutamine + ATP + H2O = L-asparaginyl-tRNA(Asn) + L-glutamate + ADP + phosphate + 2 H(+)</text>
        <dbReference type="Rhea" id="RHEA:14513"/>
        <dbReference type="Rhea" id="RHEA-COMP:9674"/>
        <dbReference type="Rhea" id="RHEA-COMP:9677"/>
        <dbReference type="ChEBI" id="CHEBI:15377"/>
        <dbReference type="ChEBI" id="CHEBI:15378"/>
        <dbReference type="ChEBI" id="CHEBI:29985"/>
        <dbReference type="ChEBI" id="CHEBI:30616"/>
        <dbReference type="ChEBI" id="CHEBI:43474"/>
        <dbReference type="ChEBI" id="CHEBI:58359"/>
        <dbReference type="ChEBI" id="CHEBI:78515"/>
        <dbReference type="ChEBI" id="CHEBI:78516"/>
        <dbReference type="ChEBI" id="CHEBI:456216"/>
    </reaction>
</comment>
<comment type="subunit">
    <text evidence="1">Heterotrimer of A, B and C subunits.</text>
</comment>
<comment type="similarity">
    <text evidence="1">Belongs to the GatC family.</text>
</comment>
<accession>A2SBV7</accession>
<name>GATC_METPP</name>
<proteinExistence type="inferred from homology"/>
<protein>
    <recommendedName>
        <fullName evidence="1">Aspartyl/glutamyl-tRNA(Asn/Gln) amidotransferase subunit C</fullName>
        <shortName evidence="1">Asp/Glu-ADT subunit C</shortName>
        <ecNumber evidence="1">6.3.5.-</ecNumber>
    </recommendedName>
</protein>
<gene>
    <name evidence="1" type="primary">gatC</name>
    <name type="ordered locus">Mpe_A0084</name>
</gene>
<feature type="chain" id="PRO_1000016147" description="Aspartyl/glutamyl-tRNA(Asn/Gln) amidotransferase subunit C">
    <location>
        <begin position="1"/>
        <end position="99"/>
    </location>
</feature>